<sequence length="297" mass="32787">MIQTRLKGMGVALITPFKEDDSVDYDALLRLVDYQLQNGTDFLCVLGTTAETPTLTKEEKDKIKRLIIERVNGRIPILLGVSSNCTRAVVETLKNDDMTGVDAVLVAVPYYNKPSQEGIYQHYKAIAEATDLPVVLYNVPGRTGVNMTAETTLRLARDFKNIIAIKEASGNITQMDDIIKNKPANFDVISGDDGITFPLITLGAVGVISVIGNAFPREFSRMTRLALQGDFANALTIHHKFTELFSLLFVDGNPAGVKAMLNVMGLIENKLRLPLVPTRITTFEKMRAILNELKIKC</sequence>
<keyword id="KW-0028">Amino-acid biosynthesis</keyword>
<keyword id="KW-0963">Cytoplasm</keyword>
<keyword id="KW-0220">Diaminopimelate biosynthesis</keyword>
<keyword id="KW-0456">Lyase</keyword>
<keyword id="KW-0457">Lysine biosynthesis</keyword>
<keyword id="KW-0704">Schiff base</keyword>
<accession>A6L5G7</accession>
<protein>
    <recommendedName>
        <fullName evidence="1">4-hydroxy-tetrahydrodipicolinate synthase</fullName>
        <shortName evidence="1">HTPA synthase</shortName>
        <ecNumber evidence="1">4.3.3.7</ecNumber>
    </recommendedName>
</protein>
<evidence type="ECO:0000255" key="1">
    <source>
        <dbReference type="HAMAP-Rule" id="MF_00418"/>
    </source>
</evidence>
<evidence type="ECO:0000305" key="2"/>
<reference key="1">
    <citation type="journal article" date="2007" name="PLoS Biol.">
        <title>Evolution of symbiotic bacteria in the distal human intestine.</title>
        <authorList>
            <person name="Xu J."/>
            <person name="Mahowald M.A."/>
            <person name="Ley R.E."/>
            <person name="Lozupone C.A."/>
            <person name="Hamady M."/>
            <person name="Martens E.C."/>
            <person name="Henrissat B."/>
            <person name="Coutinho P.M."/>
            <person name="Minx P."/>
            <person name="Latreille P."/>
            <person name="Cordum H."/>
            <person name="Van Brunt A."/>
            <person name="Kim K."/>
            <person name="Fulton R.S."/>
            <person name="Fulton L.A."/>
            <person name="Clifton S.W."/>
            <person name="Wilson R.K."/>
            <person name="Knight R.D."/>
            <person name="Gordon J.I."/>
        </authorList>
    </citation>
    <scope>NUCLEOTIDE SEQUENCE [LARGE SCALE GENOMIC DNA]</scope>
    <source>
        <strain>ATCC 8482 / DSM 1447 / JCM 5826 / CCUG 4940 / NBRC 14291 / NCTC 11154</strain>
    </source>
</reference>
<organism>
    <name type="scientific">Phocaeicola vulgatus (strain ATCC 8482 / DSM 1447 / JCM 5826 / CCUG 4940 / NBRC 14291 / NCTC 11154)</name>
    <name type="common">Bacteroides vulgatus</name>
    <dbReference type="NCBI Taxonomy" id="435590"/>
    <lineage>
        <taxon>Bacteria</taxon>
        <taxon>Pseudomonadati</taxon>
        <taxon>Bacteroidota</taxon>
        <taxon>Bacteroidia</taxon>
        <taxon>Bacteroidales</taxon>
        <taxon>Bacteroidaceae</taxon>
        <taxon>Phocaeicola</taxon>
    </lineage>
</organism>
<name>DAPA_PHOV8</name>
<proteinExistence type="inferred from homology"/>
<gene>
    <name evidence="1" type="primary">dapA</name>
    <name type="ordered locus">BVU_3305</name>
</gene>
<comment type="function">
    <text evidence="1">Catalyzes the condensation of (S)-aspartate-beta-semialdehyde [(S)-ASA] and pyruvate to 4-hydroxy-tetrahydrodipicolinate (HTPA).</text>
</comment>
<comment type="catalytic activity">
    <reaction evidence="1">
        <text>L-aspartate 4-semialdehyde + pyruvate = (2S,4S)-4-hydroxy-2,3,4,5-tetrahydrodipicolinate + H2O + H(+)</text>
        <dbReference type="Rhea" id="RHEA:34171"/>
        <dbReference type="ChEBI" id="CHEBI:15361"/>
        <dbReference type="ChEBI" id="CHEBI:15377"/>
        <dbReference type="ChEBI" id="CHEBI:15378"/>
        <dbReference type="ChEBI" id="CHEBI:67139"/>
        <dbReference type="ChEBI" id="CHEBI:537519"/>
        <dbReference type="EC" id="4.3.3.7"/>
    </reaction>
</comment>
<comment type="pathway">
    <text evidence="1">Amino-acid biosynthesis; L-lysine biosynthesis via DAP pathway; (S)-tetrahydrodipicolinate from L-aspartate: step 3/4.</text>
</comment>
<comment type="subunit">
    <text evidence="1">Homotetramer; dimer of dimers.</text>
</comment>
<comment type="subcellular location">
    <subcellularLocation>
        <location evidence="1">Cytoplasm</location>
    </subcellularLocation>
</comment>
<comment type="similarity">
    <text evidence="1">Belongs to the DapA family.</text>
</comment>
<comment type="caution">
    <text evidence="2">Was originally thought to be a dihydrodipicolinate synthase (DHDPS), catalyzing the condensation of (S)-aspartate-beta-semialdehyde [(S)-ASA] and pyruvate to dihydrodipicolinate (DHDP). However, it was shown in E.coli that the product of the enzymatic reaction is not dihydrodipicolinate but in fact (4S)-4-hydroxy-2,3,4,5-tetrahydro-(2S)-dipicolinic acid (HTPA), and that the consecutive dehydration reaction leading to DHDP is not spontaneous but catalyzed by DapB.</text>
</comment>
<dbReference type="EC" id="4.3.3.7" evidence="1"/>
<dbReference type="EMBL" id="CP000139">
    <property type="protein sequence ID" value="ABR40931.1"/>
    <property type="molecule type" value="Genomic_DNA"/>
</dbReference>
<dbReference type="RefSeq" id="WP_005842012.1">
    <property type="nucleotide sequence ID" value="NZ_JANSWM010000114.1"/>
</dbReference>
<dbReference type="SMR" id="A6L5G7"/>
<dbReference type="STRING" id="435590.BVU_3305"/>
<dbReference type="PaxDb" id="435590-BVU_3305"/>
<dbReference type="GeneID" id="5304266"/>
<dbReference type="KEGG" id="bvu:BVU_3305"/>
<dbReference type="eggNOG" id="COG0329">
    <property type="taxonomic scope" value="Bacteria"/>
</dbReference>
<dbReference type="HOGENOM" id="CLU_049343_7_1_10"/>
<dbReference type="BioCyc" id="BVUL435590:G1G59-3428-MONOMER"/>
<dbReference type="UniPathway" id="UPA00034">
    <property type="reaction ID" value="UER00017"/>
</dbReference>
<dbReference type="Proteomes" id="UP000002861">
    <property type="component" value="Chromosome"/>
</dbReference>
<dbReference type="GO" id="GO:0005829">
    <property type="term" value="C:cytosol"/>
    <property type="evidence" value="ECO:0007669"/>
    <property type="project" value="TreeGrafter"/>
</dbReference>
<dbReference type="GO" id="GO:0008840">
    <property type="term" value="F:4-hydroxy-tetrahydrodipicolinate synthase activity"/>
    <property type="evidence" value="ECO:0007669"/>
    <property type="project" value="UniProtKB-UniRule"/>
</dbReference>
<dbReference type="GO" id="GO:0019877">
    <property type="term" value="P:diaminopimelate biosynthetic process"/>
    <property type="evidence" value="ECO:0007669"/>
    <property type="project" value="UniProtKB-UniRule"/>
</dbReference>
<dbReference type="GO" id="GO:0009089">
    <property type="term" value="P:lysine biosynthetic process via diaminopimelate"/>
    <property type="evidence" value="ECO:0007669"/>
    <property type="project" value="UniProtKB-UniRule"/>
</dbReference>
<dbReference type="CDD" id="cd00950">
    <property type="entry name" value="DHDPS"/>
    <property type="match status" value="1"/>
</dbReference>
<dbReference type="Gene3D" id="3.20.20.70">
    <property type="entry name" value="Aldolase class I"/>
    <property type="match status" value="1"/>
</dbReference>
<dbReference type="HAMAP" id="MF_00418">
    <property type="entry name" value="DapA"/>
    <property type="match status" value="1"/>
</dbReference>
<dbReference type="InterPro" id="IPR013785">
    <property type="entry name" value="Aldolase_TIM"/>
</dbReference>
<dbReference type="InterPro" id="IPR005263">
    <property type="entry name" value="DapA"/>
</dbReference>
<dbReference type="InterPro" id="IPR002220">
    <property type="entry name" value="DapA-like"/>
</dbReference>
<dbReference type="InterPro" id="IPR020625">
    <property type="entry name" value="Schiff_base-form_aldolases_AS"/>
</dbReference>
<dbReference type="NCBIfam" id="TIGR00674">
    <property type="entry name" value="dapA"/>
    <property type="match status" value="1"/>
</dbReference>
<dbReference type="PANTHER" id="PTHR12128:SF66">
    <property type="entry name" value="4-HYDROXY-2-OXOGLUTARATE ALDOLASE, MITOCHONDRIAL"/>
    <property type="match status" value="1"/>
</dbReference>
<dbReference type="PANTHER" id="PTHR12128">
    <property type="entry name" value="DIHYDRODIPICOLINATE SYNTHASE"/>
    <property type="match status" value="1"/>
</dbReference>
<dbReference type="Pfam" id="PF00701">
    <property type="entry name" value="DHDPS"/>
    <property type="match status" value="1"/>
</dbReference>
<dbReference type="PIRSF" id="PIRSF001365">
    <property type="entry name" value="DHDPS"/>
    <property type="match status" value="1"/>
</dbReference>
<dbReference type="PRINTS" id="PR00146">
    <property type="entry name" value="DHPICSNTHASE"/>
</dbReference>
<dbReference type="SMART" id="SM01130">
    <property type="entry name" value="DHDPS"/>
    <property type="match status" value="1"/>
</dbReference>
<dbReference type="SUPFAM" id="SSF51569">
    <property type="entry name" value="Aldolase"/>
    <property type="match status" value="1"/>
</dbReference>
<dbReference type="PROSITE" id="PS00666">
    <property type="entry name" value="DHDPS_2"/>
    <property type="match status" value="1"/>
</dbReference>
<feature type="chain" id="PRO_0000340935" description="4-hydroxy-tetrahydrodipicolinate synthase">
    <location>
        <begin position="1"/>
        <end position="297"/>
    </location>
</feature>
<feature type="active site" description="Proton donor/acceptor" evidence="1">
    <location>
        <position position="137"/>
    </location>
</feature>
<feature type="active site" description="Schiff-base intermediate with substrate" evidence="1">
    <location>
        <position position="166"/>
    </location>
</feature>
<feature type="binding site" evidence="1">
    <location>
        <position position="49"/>
    </location>
    <ligand>
        <name>pyruvate</name>
        <dbReference type="ChEBI" id="CHEBI:15361"/>
    </ligand>
</feature>
<feature type="binding site" evidence="1">
    <location>
        <position position="208"/>
    </location>
    <ligand>
        <name>pyruvate</name>
        <dbReference type="ChEBI" id="CHEBI:15361"/>
    </ligand>
</feature>
<feature type="site" description="Part of a proton relay during catalysis" evidence="1">
    <location>
        <position position="48"/>
    </location>
</feature>
<feature type="site" description="Part of a proton relay during catalysis" evidence="1">
    <location>
        <position position="111"/>
    </location>
</feature>